<organism>
    <name type="scientific">Mycobacterium bovis (strain BCG / Pasteur 1173P2)</name>
    <dbReference type="NCBI Taxonomy" id="410289"/>
    <lineage>
        <taxon>Bacteria</taxon>
        <taxon>Bacillati</taxon>
        <taxon>Actinomycetota</taxon>
        <taxon>Actinomycetes</taxon>
        <taxon>Mycobacteriales</taxon>
        <taxon>Mycobacteriaceae</taxon>
        <taxon>Mycobacterium</taxon>
        <taxon>Mycobacterium tuberculosis complex</taxon>
    </lineage>
</organism>
<reference key="1">
    <citation type="journal article" date="2007" name="Proc. Natl. Acad. Sci. U.S.A.">
        <title>Genome plasticity of BCG and impact on vaccine efficacy.</title>
        <authorList>
            <person name="Brosch R."/>
            <person name="Gordon S.V."/>
            <person name="Garnier T."/>
            <person name="Eiglmeier K."/>
            <person name="Frigui W."/>
            <person name="Valenti P."/>
            <person name="Dos Santos S."/>
            <person name="Duthoy S."/>
            <person name="Lacroix C."/>
            <person name="Garcia-Pelayo C."/>
            <person name="Inwald J.K."/>
            <person name="Golby P."/>
            <person name="Garcia J.N."/>
            <person name="Hewinson R.G."/>
            <person name="Behr M.A."/>
            <person name="Quail M.A."/>
            <person name="Churcher C."/>
            <person name="Barrell B.G."/>
            <person name="Parkhill J."/>
            <person name="Cole S.T."/>
        </authorList>
    </citation>
    <scope>NUCLEOTIDE SEQUENCE [LARGE SCALE GENOMIC DNA]</scope>
    <source>
        <strain>BCG / Pasteur 1173P2</strain>
    </source>
</reference>
<accession>A1KJR0</accession>
<comment type="catalytic activity">
    <reaction evidence="1">
        <text>urea + 2 H2O + H(+) = hydrogencarbonate + 2 NH4(+)</text>
        <dbReference type="Rhea" id="RHEA:20557"/>
        <dbReference type="ChEBI" id="CHEBI:15377"/>
        <dbReference type="ChEBI" id="CHEBI:15378"/>
        <dbReference type="ChEBI" id="CHEBI:16199"/>
        <dbReference type="ChEBI" id="CHEBI:17544"/>
        <dbReference type="ChEBI" id="CHEBI:28938"/>
        <dbReference type="EC" id="3.5.1.5"/>
    </reaction>
</comment>
<comment type="pathway">
    <text evidence="1">Nitrogen metabolism; urea degradation; CO(2) and NH(3) from urea (urease route): step 1/1.</text>
</comment>
<comment type="subunit">
    <text evidence="1">Heterotrimer of UreA (gamma), UreB (beta) and UreC (alpha) subunits. Three heterotrimers associate to form the active enzyme.</text>
</comment>
<comment type="subcellular location">
    <subcellularLocation>
        <location evidence="1">Cytoplasm</location>
    </subcellularLocation>
</comment>
<comment type="similarity">
    <text evidence="1">Belongs to the urease gamma subunit family.</text>
</comment>
<proteinExistence type="inferred from homology"/>
<gene>
    <name evidence="1" type="primary">ureA</name>
    <name type="ordered locus">BCG_1884</name>
</gene>
<dbReference type="EC" id="3.5.1.5" evidence="1"/>
<dbReference type="EMBL" id="AM408590">
    <property type="protein sequence ID" value="CAL71871.1"/>
    <property type="molecule type" value="Genomic_DNA"/>
</dbReference>
<dbReference type="RefSeq" id="WP_003409305.1">
    <property type="nucleotide sequence ID" value="NC_008769.1"/>
</dbReference>
<dbReference type="SMR" id="A1KJR0"/>
<dbReference type="KEGG" id="mbb:BCG_1884"/>
<dbReference type="HOGENOM" id="CLU_145825_1_0_11"/>
<dbReference type="UniPathway" id="UPA00258">
    <property type="reaction ID" value="UER00370"/>
</dbReference>
<dbReference type="Proteomes" id="UP000001472">
    <property type="component" value="Chromosome"/>
</dbReference>
<dbReference type="GO" id="GO:0005737">
    <property type="term" value="C:cytoplasm"/>
    <property type="evidence" value="ECO:0007669"/>
    <property type="project" value="UniProtKB-SubCell"/>
</dbReference>
<dbReference type="GO" id="GO:0016151">
    <property type="term" value="F:nickel cation binding"/>
    <property type="evidence" value="ECO:0007669"/>
    <property type="project" value="InterPro"/>
</dbReference>
<dbReference type="GO" id="GO:0009039">
    <property type="term" value="F:urease activity"/>
    <property type="evidence" value="ECO:0007669"/>
    <property type="project" value="UniProtKB-UniRule"/>
</dbReference>
<dbReference type="GO" id="GO:0043419">
    <property type="term" value="P:urea catabolic process"/>
    <property type="evidence" value="ECO:0007669"/>
    <property type="project" value="UniProtKB-UniRule"/>
</dbReference>
<dbReference type="CDD" id="cd00390">
    <property type="entry name" value="Urease_gamma"/>
    <property type="match status" value="1"/>
</dbReference>
<dbReference type="FunFam" id="3.30.280.10:FF:000002">
    <property type="entry name" value="Urease subunit gamma"/>
    <property type="match status" value="1"/>
</dbReference>
<dbReference type="Gene3D" id="3.30.280.10">
    <property type="entry name" value="Urease, gamma-like subunit"/>
    <property type="match status" value="1"/>
</dbReference>
<dbReference type="HAMAP" id="MF_00739">
    <property type="entry name" value="Urease_gamma"/>
    <property type="match status" value="1"/>
</dbReference>
<dbReference type="InterPro" id="IPR012010">
    <property type="entry name" value="Urease_gamma"/>
</dbReference>
<dbReference type="InterPro" id="IPR002026">
    <property type="entry name" value="Urease_gamma/gamma-beta_su"/>
</dbReference>
<dbReference type="InterPro" id="IPR036463">
    <property type="entry name" value="Urease_gamma_sf"/>
</dbReference>
<dbReference type="InterPro" id="IPR050069">
    <property type="entry name" value="Urease_subunit"/>
</dbReference>
<dbReference type="NCBIfam" id="NF009712">
    <property type="entry name" value="PRK13241.1"/>
    <property type="match status" value="1"/>
</dbReference>
<dbReference type="NCBIfam" id="TIGR00193">
    <property type="entry name" value="urease_gam"/>
    <property type="match status" value="1"/>
</dbReference>
<dbReference type="PANTHER" id="PTHR33569">
    <property type="entry name" value="UREASE"/>
    <property type="match status" value="1"/>
</dbReference>
<dbReference type="PANTHER" id="PTHR33569:SF1">
    <property type="entry name" value="UREASE"/>
    <property type="match status" value="1"/>
</dbReference>
<dbReference type="Pfam" id="PF00547">
    <property type="entry name" value="Urease_gamma"/>
    <property type="match status" value="1"/>
</dbReference>
<dbReference type="PIRSF" id="PIRSF001223">
    <property type="entry name" value="Urease_gamma"/>
    <property type="match status" value="1"/>
</dbReference>
<dbReference type="SUPFAM" id="SSF54111">
    <property type="entry name" value="Urease, gamma-subunit"/>
    <property type="match status" value="1"/>
</dbReference>
<feature type="chain" id="PRO_1000046337" description="Urease subunit gamma">
    <location>
        <begin position="1"/>
        <end position="100"/>
    </location>
</feature>
<name>URE3_MYCBP</name>
<evidence type="ECO:0000255" key="1">
    <source>
        <dbReference type="HAMAP-Rule" id="MF_00739"/>
    </source>
</evidence>
<keyword id="KW-0963">Cytoplasm</keyword>
<keyword id="KW-0378">Hydrolase</keyword>
<protein>
    <recommendedName>
        <fullName evidence="1">Urease subunit gamma</fullName>
        <ecNumber evidence="1">3.5.1.5</ecNumber>
    </recommendedName>
    <alternativeName>
        <fullName evidence="1">Urea amidohydrolase subunit gamma</fullName>
    </alternativeName>
</protein>
<sequence>MRLTPHEQERLLLSYAAELARRRRARGLRLNHPEAIAVIADHILEGARDGRTVAELMASGREVLGRDDVMEGVPEMLAEVQVEATFPDGTKLVTVHQPIA</sequence>